<sequence>MMKMRWLSAAVMLTLYTSSSWAFSIDDVAKQAQSLAGKGYEAPKSNLPSVFRDMKYADYQQIQFNHDKAYWNNLKTPFKLEFYHQGMYFDTPVKINEVTATAVKRIKYSPDYFTFGDVQHDKDTVKDLGFAGFKVLYPINSKDKNDEIVSMLGASYFRVIGAGQVYGLSARGLAIDTALPSGEEFPRFKEFWIERPKPTDKRLTIYALLDSPRATGAYKFVVMPGRDTVVDVQSKIYLRDKVGKLGGAPLTSMFLFGPNQPSPANNYRPELHDSNGLSIHAGNGEWIWRPLNNPKHLAVSSFSMENPQGFGLLQRGRDFSRFEDLDDRYDLRPSAWVTPKGEWGKGSVELVEIPTNDETNDNIVAYWTPDQLPEPGKEMNFKYTITFSRDEDKLHAPDNAWVQQTRRSTGDVKQSNLIRQPDGTIAFVVDFTGAEMKKLPEDTPVTAQTSIGDNGEIVESTVRYNPVTKGWRLVMRVKVKDAKKTTEMRAALVNADQTLSETWSYQLPANE</sequence>
<gene>
    <name evidence="1" type="primary">mdoG</name>
    <name evidence="1" type="synonym">opgG</name>
    <name type="ordered locus">SBO_2018</name>
</gene>
<accession>Q31ZA4</accession>
<keyword id="KW-0574">Periplasm</keyword>
<keyword id="KW-0732">Signal</keyword>
<reference key="1">
    <citation type="journal article" date="2005" name="Nucleic Acids Res.">
        <title>Genome dynamics and diversity of Shigella species, the etiologic agents of bacillary dysentery.</title>
        <authorList>
            <person name="Yang F."/>
            <person name="Yang J."/>
            <person name="Zhang X."/>
            <person name="Chen L."/>
            <person name="Jiang Y."/>
            <person name="Yan Y."/>
            <person name="Tang X."/>
            <person name="Wang J."/>
            <person name="Xiong Z."/>
            <person name="Dong J."/>
            <person name="Xue Y."/>
            <person name="Zhu Y."/>
            <person name="Xu X."/>
            <person name="Sun L."/>
            <person name="Chen S."/>
            <person name="Nie H."/>
            <person name="Peng J."/>
            <person name="Xu J."/>
            <person name="Wang Y."/>
            <person name="Yuan Z."/>
            <person name="Wen Y."/>
            <person name="Yao Z."/>
            <person name="Shen Y."/>
            <person name="Qiang B."/>
            <person name="Hou Y."/>
            <person name="Yu J."/>
            <person name="Jin Q."/>
        </authorList>
    </citation>
    <scope>NUCLEOTIDE SEQUENCE [LARGE SCALE GENOMIC DNA]</scope>
    <source>
        <strain>Sb227</strain>
    </source>
</reference>
<feature type="signal peptide" evidence="1">
    <location>
        <begin position="1"/>
        <end position="22"/>
    </location>
</feature>
<feature type="chain" id="PRO_1000064567" description="Glucans biosynthesis protein G">
    <location>
        <begin position="23"/>
        <end position="511"/>
    </location>
</feature>
<organism>
    <name type="scientific">Shigella boydii serotype 4 (strain Sb227)</name>
    <dbReference type="NCBI Taxonomy" id="300268"/>
    <lineage>
        <taxon>Bacteria</taxon>
        <taxon>Pseudomonadati</taxon>
        <taxon>Pseudomonadota</taxon>
        <taxon>Gammaproteobacteria</taxon>
        <taxon>Enterobacterales</taxon>
        <taxon>Enterobacteriaceae</taxon>
        <taxon>Shigella</taxon>
    </lineage>
</organism>
<comment type="function">
    <text evidence="1">Involved in the biosynthesis of osmoregulated periplasmic glucans (OPGs).</text>
</comment>
<comment type="pathway">
    <text evidence="1">Glycan metabolism; osmoregulated periplasmic glucan (OPG) biosynthesis.</text>
</comment>
<comment type="subcellular location">
    <subcellularLocation>
        <location evidence="1">Periplasm</location>
    </subcellularLocation>
</comment>
<comment type="similarity">
    <text evidence="1">Belongs to the OpgD/OpgG family.</text>
</comment>
<dbReference type="EMBL" id="CP000036">
    <property type="protein sequence ID" value="ABB66604.1"/>
    <property type="molecule type" value="Genomic_DNA"/>
</dbReference>
<dbReference type="RefSeq" id="WP_011379236.1">
    <property type="nucleotide sequence ID" value="NC_007613.1"/>
</dbReference>
<dbReference type="SMR" id="Q31ZA4"/>
<dbReference type="KEGG" id="sbo:SBO_2018"/>
<dbReference type="HOGENOM" id="CLU_023403_2_0_6"/>
<dbReference type="UniPathway" id="UPA00637"/>
<dbReference type="Proteomes" id="UP000007067">
    <property type="component" value="Chromosome"/>
</dbReference>
<dbReference type="GO" id="GO:0030288">
    <property type="term" value="C:outer membrane-bounded periplasmic space"/>
    <property type="evidence" value="ECO:0007669"/>
    <property type="project" value="TreeGrafter"/>
</dbReference>
<dbReference type="GO" id="GO:0030246">
    <property type="term" value="F:carbohydrate binding"/>
    <property type="evidence" value="ECO:0007669"/>
    <property type="project" value="InterPro"/>
</dbReference>
<dbReference type="GO" id="GO:0003824">
    <property type="term" value="F:catalytic activity"/>
    <property type="evidence" value="ECO:0007669"/>
    <property type="project" value="InterPro"/>
</dbReference>
<dbReference type="GO" id="GO:0051274">
    <property type="term" value="P:beta-glucan biosynthetic process"/>
    <property type="evidence" value="ECO:0007669"/>
    <property type="project" value="TreeGrafter"/>
</dbReference>
<dbReference type="FunFam" id="2.60.40.10:FF:000294">
    <property type="entry name" value="Glucans biosynthesis protein G"/>
    <property type="match status" value="1"/>
</dbReference>
<dbReference type="FunFam" id="2.70.98.10:FF:000001">
    <property type="entry name" value="Glucans biosynthesis protein G"/>
    <property type="match status" value="1"/>
</dbReference>
<dbReference type="Gene3D" id="2.70.98.10">
    <property type="match status" value="1"/>
</dbReference>
<dbReference type="Gene3D" id="2.60.40.10">
    <property type="entry name" value="Immunoglobulins"/>
    <property type="match status" value="1"/>
</dbReference>
<dbReference type="HAMAP" id="MF_01069">
    <property type="entry name" value="MdoG_OpgG"/>
    <property type="match status" value="1"/>
</dbReference>
<dbReference type="InterPro" id="IPR011013">
    <property type="entry name" value="Gal_mutarotase_sf_dom"/>
</dbReference>
<dbReference type="InterPro" id="IPR014718">
    <property type="entry name" value="GH-type_carb-bd"/>
</dbReference>
<dbReference type="InterPro" id="IPR014438">
    <property type="entry name" value="Glucan_biosyn_MdoG/MdoD"/>
</dbReference>
<dbReference type="InterPro" id="IPR007444">
    <property type="entry name" value="Glucan_biosyn_MdoG_C"/>
</dbReference>
<dbReference type="InterPro" id="IPR013783">
    <property type="entry name" value="Ig-like_fold"/>
</dbReference>
<dbReference type="InterPro" id="IPR014756">
    <property type="entry name" value="Ig_E-set"/>
</dbReference>
<dbReference type="InterPro" id="IPR023704">
    <property type="entry name" value="MdoG_OpgG"/>
</dbReference>
<dbReference type="PANTHER" id="PTHR30504">
    <property type="entry name" value="GLUCANS BIOSYNTHESIS PROTEIN"/>
    <property type="match status" value="1"/>
</dbReference>
<dbReference type="PANTHER" id="PTHR30504:SF4">
    <property type="entry name" value="GLUCANS BIOSYNTHESIS PROTEIN G"/>
    <property type="match status" value="1"/>
</dbReference>
<dbReference type="Pfam" id="PF04349">
    <property type="entry name" value="MdoG"/>
    <property type="match status" value="1"/>
</dbReference>
<dbReference type="PIRSF" id="PIRSF006281">
    <property type="entry name" value="MdoG"/>
    <property type="match status" value="1"/>
</dbReference>
<dbReference type="SUPFAM" id="SSF81296">
    <property type="entry name" value="E set domains"/>
    <property type="match status" value="1"/>
</dbReference>
<dbReference type="SUPFAM" id="SSF74650">
    <property type="entry name" value="Galactose mutarotase-like"/>
    <property type="match status" value="1"/>
</dbReference>
<evidence type="ECO:0000255" key="1">
    <source>
        <dbReference type="HAMAP-Rule" id="MF_01069"/>
    </source>
</evidence>
<proteinExistence type="inferred from homology"/>
<protein>
    <recommendedName>
        <fullName evidence="1">Glucans biosynthesis protein G</fullName>
    </recommendedName>
</protein>
<name>OPGG_SHIBS</name>